<organism>
    <name type="scientific">Prochlorococcus marinus (strain NATL1A)</name>
    <dbReference type="NCBI Taxonomy" id="167555"/>
    <lineage>
        <taxon>Bacteria</taxon>
        <taxon>Bacillati</taxon>
        <taxon>Cyanobacteriota</taxon>
        <taxon>Cyanophyceae</taxon>
        <taxon>Synechococcales</taxon>
        <taxon>Prochlorococcaceae</taxon>
        <taxon>Prochlorococcus</taxon>
    </lineage>
</organism>
<gene>
    <name type="ordered locus">NATL1_16091</name>
</gene>
<name>NTPP_PROM1</name>
<sequence length="211" mass="23610">MFVLASASKARQKLLDQIALRHKVIVSDFDETQLQEPDPILKVKLLAKGKADSALKKLIEENHALNTYQALLGCDSLFEFKGEIFEKPINKEQLISRWKRMSGQSGFLHTGHYLISLDNSKSDMESISQNNSCEGVVSTKIEFMNLSNFEINKYASTSEPYNCAGGFAIEGNGGLFIKKIDGCFSNVIGLSLPWLKNNLEKYGLSRLLLDR</sequence>
<comment type="function">
    <text evidence="1">Nucleoside triphosphate pyrophosphatase. May have a dual role in cell division arrest and in preventing the incorporation of modified nucleotides into cellular nucleic acids.</text>
</comment>
<comment type="catalytic activity">
    <reaction evidence="1">
        <text>a ribonucleoside 5'-triphosphate + H2O = a ribonucleoside 5'-phosphate + diphosphate + H(+)</text>
        <dbReference type="Rhea" id="RHEA:23996"/>
        <dbReference type="ChEBI" id="CHEBI:15377"/>
        <dbReference type="ChEBI" id="CHEBI:15378"/>
        <dbReference type="ChEBI" id="CHEBI:33019"/>
        <dbReference type="ChEBI" id="CHEBI:58043"/>
        <dbReference type="ChEBI" id="CHEBI:61557"/>
        <dbReference type="EC" id="3.6.1.9"/>
    </reaction>
</comment>
<comment type="catalytic activity">
    <reaction evidence="1">
        <text>a 2'-deoxyribonucleoside 5'-triphosphate + H2O = a 2'-deoxyribonucleoside 5'-phosphate + diphosphate + H(+)</text>
        <dbReference type="Rhea" id="RHEA:44644"/>
        <dbReference type="ChEBI" id="CHEBI:15377"/>
        <dbReference type="ChEBI" id="CHEBI:15378"/>
        <dbReference type="ChEBI" id="CHEBI:33019"/>
        <dbReference type="ChEBI" id="CHEBI:61560"/>
        <dbReference type="ChEBI" id="CHEBI:65317"/>
        <dbReference type="EC" id="3.6.1.9"/>
    </reaction>
</comment>
<comment type="cofactor">
    <cofactor evidence="1">
        <name>a divalent metal cation</name>
        <dbReference type="ChEBI" id="CHEBI:60240"/>
    </cofactor>
</comment>
<comment type="subcellular location">
    <subcellularLocation>
        <location evidence="1">Cytoplasm</location>
    </subcellularLocation>
</comment>
<comment type="similarity">
    <text evidence="1">Belongs to the Maf family.</text>
</comment>
<keyword id="KW-0963">Cytoplasm</keyword>
<keyword id="KW-0378">Hydrolase</keyword>
<keyword id="KW-0546">Nucleotide metabolism</keyword>
<accession>A2C3V6</accession>
<dbReference type="EC" id="3.6.1.9" evidence="1"/>
<dbReference type="EMBL" id="CP000553">
    <property type="protein sequence ID" value="ABM76166.1"/>
    <property type="molecule type" value="Genomic_DNA"/>
</dbReference>
<dbReference type="RefSeq" id="WP_011824175.1">
    <property type="nucleotide sequence ID" value="NC_008819.1"/>
</dbReference>
<dbReference type="SMR" id="A2C3V6"/>
<dbReference type="KEGG" id="pme:NATL1_16091"/>
<dbReference type="eggNOG" id="COG0424">
    <property type="taxonomic scope" value="Bacteria"/>
</dbReference>
<dbReference type="HOGENOM" id="CLU_040416_1_2_3"/>
<dbReference type="Proteomes" id="UP000002592">
    <property type="component" value="Chromosome"/>
</dbReference>
<dbReference type="GO" id="GO:0005737">
    <property type="term" value="C:cytoplasm"/>
    <property type="evidence" value="ECO:0007669"/>
    <property type="project" value="UniProtKB-SubCell"/>
</dbReference>
<dbReference type="GO" id="GO:0047429">
    <property type="term" value="F:nucleoside triphosphate diphosphatase activity"/>
    <property type="evidence" value="ECO:0007669"/>
    <property type="project" value="UniProtKB-EC"/>
</dbReference>
<dbReference type="GO" id="GO:0009117">
    <property type="term" value="P:nucleotide metabolic process"/>
    <property type="evidence" value="ECO:0007669"/>
    <property type="project" value="UniProtKB-KW"/>
</dbReference>
<dbReference type="CDD" id="cd00555">
    <property type="entry name" value="Maf"/>
    <property type="match status" value="1"/>
</dbReference>
<dbReference type="Gene3D" id="3.90.950.10">
    <property type="match status" value="1"/>
</dbReference>
<dbReference type="HAMAP" id="MF_00528">
    <property type="entry name" value="Maf"/>
    <property type="match status" value="1"/>
</dbReference>
<dbReference type="InterPro" id="IPR029001">
    <property type="entry name" value="ITPase-like_fam"/>
</dbReference>
<dbReference type="InterPro" id="IPR003697">
    <property type="entry name" value="Maf-like"/>
</dbReference>
<dbReference type="NCBIfam" id="TIGR00172">
    <property type="entry name" value="maf"/>
    <property type="match status" value="1"/>
</dbReference>
<dbReference type="PANTHER" id="PTHR43213">
    <property type="entry name" value="BIFUNCTIONAL DTTP/UTP PYROPHOSPHATASE/METHYLTRANSFERASE PROTEIN-RELATED"/>
    <property type="match status" value="1"/>
</dbReference>
<dbReference type="PANTHER" id="PTHR43213:SF5">
    <property type="entry name" value="BIFUNCTIONAL DTTP_UTP PYROPHOSPHATASE_METHYLTRANSFERASE PROTEIN-RELATED"/>
    <property type="match status" value="1"/>
</dbReference>
<dbReference type="Pfam" id="PF02545">
    <property type="entry name" value="Maf"/>
    <property type="match status" value="1"/>
</dbReference>
<dbReference type="PIRSF" id="PIRSF006305">
    <property type="entry name" value="Maf"/>
    <property type="match status" value="1"/>
</dbReference>
<dbReference type="SUPFAM" id="SSF52972">
    <property type="entry name" value="ITPase-like"/>
    <property type="match status" value="1"/>
</dbReference>
<reference key="1">
    <citation type="journal article" date="2007" name="PLoS Genet.">
        <title>Patterns and implications of gene gain and loss in the evolution of Prochlorococcus.</title>
        <authorList>
            <person name="Kettler G.C."/>
            <person name="Martiny A.C."/>
            <person name="Huang K."/>
            <person name="Zucker J."/>
            <person name="Coleman M.L."/>
            <person name="Rodrigue S."/>
            <person name="Chen F."/>
            <person name="Lapidus A."/>
            <person name="Ferriera S."/>
            <person name="Johnson J."/>
            <person name="Steglich C."/>
            <person name="Church G.M."/>
            <person name="Richardson P."/>
            <person name="Chisholm S.W."/>
        </authorList>
    </citation>
    <scope>NUCLEOTIDE SEQUENCE [LARGE SCALE GENOMIC DNA]</scope>
    <source>
        <strain>NATL1A</strain>
    </source>
</reference>
<feature type="chain" id="PRO_1000060955" description="Nucleoside triphosphate pyrophosphatase">
    <location>
        <begin position="1"/>
        <end position="211"/>
    </location>
</feature>
<feature type="active site" description="Proton acceptor" evidence="1">
    <location>
        <position position="75"/>
    </location>
</feature>
<proteinExistence type="inferred from homology"/>
<protein>
    <recommendedName>
        <fullName evidence="1">Nucleoside triphosphate pyrophosphatase</fullName>
        <ecNumber evidence="1">3.6.1.9</ecNumber>
    </recommendedName>
    <alternativeName>
        <fullName evidence="1">Nucleotide pyrophosphatase</fullName>
        <shortName evidence="1">Nucleotide PPase</shortName>
    </alternativeName>
</protein>
<evidence type="ECO:0000255" key="1">
    <source>
        <dbReference type="HAMAP-Rule" id="MF_00528"/>
    </source>
</evidence>